<organism>
    <name type="scientific">Bartonella bacilliformis (strain ATCC 35685 / KC583 / Herrer 020/F12,63)</name>
    <dbReference type="NCBI Taxonomy" id="360095"/>
    <lineage>
        <taxon>Bacteria</taxon>
        <taxon>Pseudomonadati</taxon>
        <taxon>Pseudomonadota</taxon>
        <taxon>Alphaproteobacteria</taxon>
        <taxon>Hyphomicrobiales</taxon>
        <taxon>Bartonellaceae</taxon>
        <taxon>Bartonella</taxon>
    </lineage>
</organism>
<comment type="function">
    <text evidence="1">Binds as a heterodimer with protein bS6 to the central domain of the 16S rRNA, where it helps stabilize the platform of the 30S subunit.</text>
</comment>
<comment type="subunit">
    <text evidence="1">Part of the 30S ribosomal subunit. Forms a tight heterodimer with protein bS6.</text>
</comment>
<comment type="similarity">
    <text evidence="1">Belongs to the bacterial ribosomal protein bS18 family.</text>
</comment>
<keyword id="KW-0687">Ribonucleoprotein</keyword>
<keyword id="KW-0689">Ribosomal protein</keyword>
<keyword id="KW-0694">RNA-binding</keyword>
<keyword id="KW-0699">rRNA-binding</keyword>
<reference key="1">
    <citation type="submission" date="2006-12" db="EMBL/GenBank/DDBJ databases">
        <authorList>
            <person name="Hendrix L."/>
            <person name="Mohamoud Y."/>
            <person name="Radune D."/>
            <person name="Shvartsbeyn A."/>
            <person name="Daugherty S."/>
            <person name="Dodson R."/>
            <person name="Durkin A.S."/>
            <person name="Harkins D."/>
            <person name="Huot H."/>
            <person name="Kothari S.P."/>
            <person name="Madupu R."/>
            <person name="Li J."/>
            <person name="Nelson W.C."/>
            <person name="Shrivastava S."/>
            <person name="Giglio M.G."/>
            <person name="Haft D."/>
            <person name="Selengut J."/>
            <person name="Fraser-Ligget C."/>
            <person name="Seshadri R."/>
        </authorList>
    </citation>
    <scope>NUCLEOTIDE SEQUENCE [LARGE SCALE GENOMIC DNA]</scope>
    <source>
        <strain>ATCC 35685 / KC583 / Herrer 020/F12,63</strain>
    </source>
</reference>
<protein>
    <recommendedName>
        <fullName evidence="1">Small ribosomal subunit protein bS18</fullName>
    </recommendedName>
    <alternativeName>
        <fullName evidence="2">30S ribosomal protein S18</fullName>
    </alternativeName>
</protein>
<dbReference type="EMBL" id="CP000524">
    <property type="protein sequence ID" value="ABM45191.1"/>
    <property type="molecule type" value="Genomic_DNA"/>
</dbReference>
<dbReference type="RefSeq" id="WP_005766584.1">
    <property type="nucleotide sequence ID" value="NC_008783.1"/>
</dbReference>
<dbReference type="SMR" id="A1US55"/>
<dbReference type="STRING" id="360095.BARBAKC583_0493"/>
<dbReference type="GeneID" id="4684550"/>
<dbReference type="KEGG" id="bbk:BARBAKC583_0493"/>
<dbReference type="PATRIC" id="fig|360095.6.peg.476"/>
<dbReference type="eggNOG" id="COG0238">
    <property type="taxonomic scope" value="Bacteria"/>
</dbReference>
<dbReference type="HOGENOM" id="CLU_148710_0_3_5"/>
<dbReference type="OrthoDB" id="9812008at2"/>
<dbReference type="Proteomes" id="UP000000643">
    <property type="component" value="Chromosome"/>
</dbReference>
<dbReference type="GO" id="GO:0022627">
    <property type="term" value="C:cytosolic small ribosomal subunit"/>
    <property type="evidence" value="ECO:0007669"/>
    <property type="project" value="TreeGrafter"/>
</dbReference>
<dbReference type="GO" id="GO:0070181">
    <property type="term" value="F:small ribosomal subunit rRNA binding"/>
    <property type="evidence" value="ECO:0007669"/>
    <property type="project" value="TreeGrafter"/>
</dbReference>
<dbReference type="GO" id="GO:0003735">
    <property type="term" value="F:structural constituent of ribosome"/>
    <property type="evidence" value="ECO:0007669"/>
    <property type="project" value="InterPro"/>
</dbReference>
<dbReference type="GO" id="GO:0006412">
    <property type="term" value="P:translation"/>
    <property type="evidence" value="ECO:0007669"/>
    <property type="project" value="UniProtKB-UniRule"/>
</dbReference>
<dbReference type="Gene3D" id="4.10.640.10">
    <property type="entry name" value="Ribosomal protein S18"/>
    <property type="match status" value="1"/>
</dbReference>
<dbReference type="HAMAP" id="MF_00270">
    <property type="entry name" value="Ribosomal_bS18"/>
    <property type="match status" value="1"/>
</dbReference>
<dbReference type="InterPro" id="IPR001648">
    <property type="entry name" value="Ribosomal_bS18"/>
</dbReference>
<dbReference type="InterPro" id="IPR018275">
    <property type="entry name" value="Ribosomal_bS18_CS"/>
</dbReference>
<dbReference type="InterPro" id="IPR036870">
    <property type="entry name" value="Ribosomal_bS18_sf"/>
</dbReference>
<dbReference type="NCBIfam" id="TIGR00165">
    <property type="entry name" value="S18"/>
    <property type="match status" value="1"/>
</dbReference>
<dbReference type="PANTHER" id="PTHR13479">
    <property type="entry name" value="30S RIBOSOMAL PROTEIN S18"/>
    <property type="match status" value="1"/>
</dbReference>
<dbReference type="PANTHER" id="PTHR13479:SF40">
    <property type="entry name" value="SMALL RIBOSOMAL SUBUNIT PROTEIN BS18M"/>
    <property type="match status" value="1"/>
</dbReference>
<dbReference type="Pfam" id="PF01084">
    <property type="entry name" value="Ribosomal_S18"/>
    <property type="match status" value="1"/>
</dbReference>
<dbReference type="PRINTS" id="PR00974">
    <property type="entry name" value="RIBOSOMALS18"/>
</dbReference>
<dbReference type="SUPFAM" id="SSF46911">
    <property type="entry name" value="Ribosomal protein S18"/>
    <property type="match status" value="1"/>
</dbReference>
<dbReference type="PROSITE" id="PS00057">
    <property type="entry name" value="RIBOSOMAL_S18"/>
    <property type="match status" value="1"/>
</dbReference>
<evidence type="ECO:0000255" key="1">
    <source>
        <dbReference type="HAMAP-Rule" id="MF_00270"/>
    </source>
</evidence>
<evidence type="ECO:0000305" key="2"/>
<sequence length="82" mass="9546">MSDINQNLARRPFNRRRKTCPFSGTNVAKIDYKDIKLLQRYISERGKIVPSRITAVSQKKQRELANAIKRARFLGLLPYVVK</sequence>
<name>RS18_BARBK</name>
<accession>A1US55</accession>
<feature type="chain" id="PRO_1000003446" description="Small ribosomal subunit protein bS18">
    <location>
        <begin position="1"/>
        <end position="82"/>
    </location>
</feature>
<gene>
    <name evidence="1" type="primary">rpsR</name>
    <name type="ordered locus">BARBAKC583_0493</name>
</gene>
<proteinExistence type="inferred from homology"/>